<evidence type="ECO:0000255" key="1">
    <source>
        <dbReference type="HAMAP-Rule" id="MF_01516"/>
    </source>
</evidence>
<gene>
    <name evidence="1" type="primary">mdh</name>
    <name type="ordered locus">Spea_0850</name>
</gene>
<name>MDH_SHEPA</name>
<protein>
    <recommendedName>
        <fullName evidence="1">Malate dehydrogenase</fullName>
        <ecNumber evidence="1">1.1.1.37</ecNumber>
    </recommendedName>
</protein>
<reference key="1">
    <citation type="submission" date="2007-10" db="EMBL/GenBank/DDBJ databases">
        <title>Complete sequence of Shewanella pealeana ATCC 700345.</title>
        <authorList>
            <consortium name="US DOE Joint Genome Institute"/>
            <person name="Copeland A."/>
            <person name="Lucas S."/>
            <person name="Lapidus A."/>
            <person name="Barry K."/>
            <person name="Glavina del Rio T."/>
            <person name="Dalin E."/>
            <person name="Tice H."/>
            <person name="Pitluck S."/>
            <person name="Chertkov O."/>
            <person name="Brettin T."/>
            <person name="Bruce D."/>
            <person name="Detter J.C."/>
            <person name="Han C."/>
            <person name="Schmutz J."/>
            <person name="Larimer F."/>
            <person name="Land M."/>
            <person name="Hauser L."/>
            <person name="Kyrpides N."/>
            <person name="Kim E."/>
            <person name="Zhao J.-S.Z."/>
            <person name="Manno D."/>
            <person name="Hawari J."/>
            <person name="Richardson P."/>
        </authorList>
    </citation>
    <scope>NUCLEOTIDE SEQUENCE [LARGE SCALE GENOMIC DNA]</scope>
    <source>
        <strain>ATCC 700345 / ANG-SQ1</strain>
    </source>
</reference>
<accession>A8H0U0</accession>
<feature type="chain" id="PRO_1000087540" description="Malate dehydrogenase">
    <location>
        <begin position="1"/>
        <end position="311"/>
    </location>
</feature>
<feature type="active site" description="Proton acceptor" evidence="1">
    <location>
        <position position="177"/>
    </location>
</feature>
<feature type="binding site" evidence="1">
    <location>
        <begin position="7"/>
        <end position="13"/>
    </location>
    <ligand>
        <name>NAD(+)</name>
        <dbReference type="ChEBI" id="CHEBI:57540"/>
    </ligand>
</feature>
<feature type="binding site" evidence="1">
    <location>
        <position position="34"/>
    </location>
    <ligand>
        <name>NAD(+)</name>
        <dbReference type="ChEBI" id="CHEBI:57540"/>
    </ligand>
</feature>
<feature type="binding site" evidence="1">
    <location>
        <position position="81"/>
    </location>
    <ligand>
        <name>substrate</name>
    </ligand>
</feature>
<feature type="binding site" evidence="1">
    <location>
        <position position="87"/>
    </location>
    <ligand>
        <name>substrate</name>
    </ligand>
</feature>
<feature type="binding site" evidence="1">
    <location>
        <position position="94"/>
    </location>
    <ligand>
        <name>NAD(+)</name>
        <dbReference type="ChEBI" id="CHEBI:57540"/>
    </ligand>
</feature>
<feature type="binding site" evidence="1">
    <location>
        <begin position="117"/>
        <end position="119"/>
    </location>
    <ligand>
        <name>NAD(+)</name>
        <dbReference type="ChEBI" id="CHEBI:57540"/>
    </ligand>
</feature>
<feature type="binding site" evidence="1">
    <location>
        <position position="119"/>
    </location>
    <ligand>
        <name>substrate</name>
    </ligand>
</feature>
<feature type="binding site" evidence="1">
    <location>
        <position position="153"/>
    </location>
    <ligand>
        <name>substrate</name>
    </ligand>
</feature>
<feature type="binding site" evidence="1">
    <location>
        <position position="227"/>
    </location>
    <ligand>
        <name>NAD(+)</name>
        <dbReference type="ChEBI" id="CHEBI:57540"/>
    </ligand>
</feature>
<keyword id="KW-0520">NAD</keyword>
<keyword id="KW-0560">Oxidoreductase</keyword>
<keyword id="KW-1185">Reference proteome</keyword>
<keyword id="KW-0816">Tricarboxylic acid cycle</keyword>
<dbReference type="EC" id="1.1.1.37" evidence="1"/>
<dbReference type="EMBL" id="CP000851">
    <property type="protein sequence ID" value="ABV86177.1"/>
    <property type="molecule type" value="Genomic_DNA"/>
</dbReference>
<dbReference type="RefSeq" id="WP_012154111.1">
    <property type="nucleotide sequence ID" value="NC_009901.1"/>
</dbReference>
<dbReference type="SMR" id="A8H0U0"/>
<dbReference type="STRING" id="398579.Spea_0850"/>
<dbReference type="KEGG" id="spl:Spea_0850"/>
<dbReference type="eggNOG" id="COG0039">
    <property type="taxonomic scope" value="Bacteria"/>
</dbReference>
<dbReference type="HOGENOM" id="CLU_047181_1_0_6"/>
<dbReference type="OrthoDB" id="9802969at2"/>
<dbReference type="Proteomes" id="UP000002608">
    <property type="component" value="Chromosome"/>
</dbReference>
<dbReference type="GO" id="GO:0005737">
    <property type="term" value="C:cytoplasm"/>
    <property type="evidence" value="ECO:0007669"/>
    <property type="project" value="TreeGrafter"/>
</dbReference>
<dbReference type="GO" id="GO:0030060">
    <property type="term" value="F:L-malate dehydrogenase (NAD+) activity"/>
    <property type="evidence" value="ECO:0007669"/>
    <property type="project" value="UniProtKB-UniRule"/>
</dbReference>
<dbReference type="GO" id="GO:0006108">
    <property type="term" value="P:malate metabolic process"/>
    <property type="evidence" value="ECO:0007669"/>
    <property type="project" value="InterPro"/>
</dbReference>
<dbReference type="GO" id="GO:0006099">
    <property type="term" value="P:tricarboxylic acid cycle"/>
    <property type="evidence" value="ECO:0007669"/>
    <property type="project" value="UniProtKB-UniRule"/>
</dbReference>
<dbReference type="CDD" id="cd01337">
    <property type="entry name" value="MDH_glyoxysomal_mitochondrial"/>
    <property type="match status" value="1"/>
</dbReference>
<dbReference type="FunFam" id="3.40.50.720:FF:000017">
    <property type="entry name" value="Malate dehydrogenase"/>
    <property type="match status" value="1"/>
</dbReference>
<dbReference type="FunFam" id="3.90.110.10:FF:000001">
    <property type="entry name" value="Malate dehydrogenase"/>
    <property type="match status" value="1"/>
</dbReference>
<dbReference type="Gene3D" id="3.90.110.10">
    <property type="entry name" value="Lactate dehydrogenase/glycoside hydrolase, family 4, C-terminal"/>
    <property type="match status" value="1"/>
</dbReference>
<dbReference type="Gene3D" id="3.40.50.720">
    <property type="entry name" value="NAD(P)-binding Rossmann-like Domain"/>
    <property type="match status" value="1"/>
</dbReference>
<dbReference type="HAMAP" id="MF_01516">
    <property type="entry name" value="Malate_dehydrog_1"/>
    <property type="match status" value="1"/>
</dbReference>
<dbReference type="InterPro" id="IPR001557">
    <property type="entry name" value="L-lactate/malate_DH"/>
</dbReference>
<dbReference type="InterPro" id="IPR022383">
    <property type="entry name" value="Lactate/malate_DH_C"/>
</dbReference>
<dbReference type="InterPro" id="IPR001236">
    <property type="entry name" value="Lactate/malate_DH_N"/>
</dbReference>
<dbReference type="InterPro" id="IPR015955">
    <property type="entry name" value="Lactate_DH/Glyco_Ohase_4_C"/>
</dbReference>
<dbReference type="InterPro" id="IPR001252">
    <property type="entry name" value="Malate_DH_AS"/>
</dbReference>
<dbReference type="InterPro" id="IPR010097">
    <property type="entry name" value="Malate_DH_type1"/>
</dbReference>
<dbReference type="InterPro" id="IPR023958">
    <property type="entry name" value="Malate_DH_type1_bac"/>
</dbReference>
<dbReference type="InterPro" id="IPR036291">
    <property type="entry name" value="NAD(P)-bd_dom_sf"/>
</dbReference>
<dbReference type="NCBIfam" id="TIGR01772">
    <property type="entry name" value="MDH_euk_gproteo"/>
    <property type="match status" value="1"/>
</dbReference>
<dbReference type="PANTHER" id="PTHR11540">
    <property type="entry name" value="MALATE AND LACTATE DEHYDROGENASE"/>
    <property type="match status" value="1"/>
</dbReference>
<dbReference type="PANTHER" id="PTHR11540:SF16">
    <property type="entry name" value="MALATE DEHYDROGENASE, MITOCHONDRIAL"/>
    <property type="match status" value="1"/>
</dbReference>
<dbReference type="Pfam" id="PF02866">
    <property type="entry name" value="Ldh_1_C"/>
    <property type="match status" value="1"/>
</dbReference>
<dbReference type="Pfam" id="PF00056">
    <property type="entry name" value="Ldh_1_N"/>
    <property type="match status" value="1"/>
</dbReference>
<dbReference type="PIRSF" id="PIRSF000102">
    <property type="entry name" value="Lac_mal_DH"/>
    <property type="match status" value="1"/>
</dbReference>
<dbReference type="SUPFAM" id="SSF56327">
    <property type="entry name" value="LDH C-terminal domain-like"/>
    <property type="match status" value="1"/>
</dbReference>
<dbReference type="SUPFAM" id="SSF51735">
    <property type="entry name" value="NAD(P)-binding Rossmann-fold domains"/>
    <property type="match status" value="1"/>
</dbReference>
<dbReference type="PROSITE" id="PS00068">
    <property type="entry name" value="MDH"/>
    <property type="match status" value="1"/>
</dbReference>
<proteinExistence type="inferred from homology"/>
<organism>
    <name type="scientific">Shewanella pealeana (strain ATCC 700345 / ANG-SQ1)</name>
    <dbReference type="NCBI Taxonomy" id="398579"/>
    <lineage>
        <taxon>Bacteria</taxon>
        <taxon>Pseudomonadati</taxon>
        <taxon>Pseudomonadota</taxon>
        <taxon>Gammaproteobacteria</taxon>
        <taxon>Alteromonadales</taxon>
        <taxon>Shewanellaceae</taxon>
        <taxon>Shewanella</taxon>
    </lineage>
</organism>
<sequence>MKVAVLGAAGGIGQALALLLKTQLPAGSKLSLYDIAPVTPGVAVDLSHIPTAVEVKGFAGEDPTAALEGADVVLISAGVARKPGMDRSDLFNINAGIVRNLVEKCAATCPKALIGIITNPVNTTVAIAAEVLKNAGVYDKNRLFGVTTLDVIRSETFVAEAKGLNVADVKVPVIGGHSGVTILPLLSQVEGVSFTDAEVAALTTRIQNAGTEVVEAKAGGGSATLSMGQAACRFGLSLVRGLQGEANVVECAYVDGGSEHAEFFAQPVVLGKNGVEEVLAYGEVSAFEANARDAMLDTLQADIQLGIDFVK</sequence>
<comment type="function">
    <text evidence="1">Catalyzes the reversible oxidation of malate to oxaloacetate.</text>
</comment>
<comment type="catalytic activity">
    <reaction evidence="1">
        <text>(S)-malate + NAD(+) = oxaloacetate + NADH + H(+)</text>
        <dbReference type="Rhea" id="RHEA:21432"/>
        <dbReference type="ChEBI" id="CHEBI:15378"/>
        <dbReference type="ChEBI" id="CHEBI:15589"/>
        <dbReference type="ChEBI" id="CHEBI:16452"/>
        <dbReference type="ChEBI" id="CHEBI:57540"/>
        <dbReference type="ChEBI" id="CHEBI:57945"/>
        <dbReference type="EC" id="1.1.1.37"/>
    </reaction>
</comment>
<comment type="subunit">
    <text evidence="1">Homodimer.</text>
</comment>
<comment type="similarity">
    <text evidence="1">Belongs to the LDH/MDH superfamily. MDH type 1 family.</text>
</comment>